<comment type="function">
    <text evidence="1">Required for accurate and efficient protein synthesis under certain stress conditions. May act as a fidelity factor of the translation reaction, by catalyzing a one-codon backward translocation of tRNAs on improperly translocated ribosomes. Back-translocation proceeds from a post-translocation (POST) complex to a pre-translocation (PRE) complex, thus giving elongation factor G a second chance to translocate the tRNAs correctly. Binds to ribosomes in a GTP-dependent manner.</text>
</comment>
<comment type="catalytic activity">
    <reaction evidence="1">
        <text>GTP + H2O = GDP + phosphate + H(+)</text>
        <dbReference type="Rhea" id="RHEA:19669"/>
        <dbReference type="ChEBI" id="CHEBI:15377"/>
        <dbReference type="ChEBI" id="CHEBI:15378"/>
        <dbReference type="ChEBI" id="CHEBI:37565"/>
        <dbReference type="ChEBI" id="CHEBI:43474"/>
        <dbReference type="ChEBI" id="CHEBI:58189"/>
        <dbReference type="EC" id="3.6.5.n1"/>
    </reaction>
</comment>
<comment type="subcellular location">
    <subcellularLocation>
        <location evidence="1">Cell inner membrane</location>
        <topology evidence="1">Peripheral membrane protein</topology>
        <orientation evidence="1">Cytoplasmic side</orientation>
    </subcellularLocation>
</comment>
<comment type="similarity">
    <text evidence="1">Belongs to the TRAFAC class translation factor GTPase superfamily. Classic translation factor GTPase family. LepA subfamily.</text>
</comment>
<protein>
    <recommendedName>
        <fullName evidence="1">Elongation factor 4</fullName>
        <shortName evidence="1">EF-4</shortName>
        <ecNumber evidence="1">3.6.5.n1</ecNumber>
    </recommendedName>
    <alternativeName>
        <fullName evidence="1">Ribosomal back-translocase LepA</fullName>
    </alternativeName>
</protein>
<evidence type="ECO:0000255" key="1">
    <source>
        <dbReference type="HAMAP-Rule" id="MF_00071"/>
    </source>
</evidence>
<sequence length="602" mass="67379">MKPYKIENIRNFSIIAHIDHGKSTIADRLLESTSTIEQREMREQLLDSMDLERERGITIKAHPVTMTYEYEGETYELNLIDTPGHVDFSYEVSRSLAACEGALLIVDAAQGVQAQSLANVYLALERDLEIIPVLNKIDLPAAQPEAIKKQIEEFIGLDTSNAIACSAKTGQGIPEILESIIRLVPPPKPSQETELKALIFDSHYDPYVGIMVYVRVISGEIKKGDRITFMSTKGSSFEVLGIGAFLPEATLIEGSLRAGQVGYFIANLKKVKDVKIGDTVTTVKHPAKEPLEGFKEIKPVVFAGIYPIDSSDFDTLKDALGRLQLNDSALTIEQESSHSLGFGFRCGFLGLLHLEIIFERISREFDLDIIATAPSVIYKVVLKNGKTLFIDNPTAYPDPALIEHMEEPWVHVNIITPQEYLSNIMSLCMDKRGICLKTDMLDQHRLVLSYELPLNEIVSDFNDKLKSVTKGYGSFDYRLGDYKPGAIIKLEILINDETVDAFSCLVHRDKAESKGRSICEKLVDVIPPQLFKIPIQAAINKKIIARETIRALAKNVTAKCYGGDITRKRKLWEKQKKGKKRMKEFGKVSIPNTAFVEVLKME</sequence>
<reference key="1">
    <citation type="journal article" date="2000" name="Nucleic Acids Res.">
        <title>Genome sequences of Chlamydia trachomatis MoPn and Chlamydia pneumoniae AR39.</title>
        <authorList>
            <person name="Read T.D."/>
            <person name="Brunham R.C."/>
            <person name="Shen C."/>
            <person name="Gill S.R."/>
            <person name="Heidelberg J.F."/>
            <person name="White O."/>
            <person name="Hickey E.K."/>
            <person name="Peterson J.D."/>
            <person name="Utterback T.R."/>
            <person name="Berry K.J."/>
            <person name="Bass S."/>
            <person name="Linher K.D."/>
            <person name="Weidman J.F."/>
            <person name="Khouri H.M."/>
            <person name="Craven B."/>
            <person name="Bowman C."/>
            <person name="Dodson R.J."/>
            <person name="Gwinn M.L."/>
            <person name="Nelson W.C."/>
            <person name="DeBoy R.T."/>
            <person name="Kolonay J.F."/>
            <person name="McClarty G."/>
            <person name="Salzberg S.L."/>
            <person name="Eisen J.A."/>
            <person name="Fraser C.M."/>
        </authorList>
    </citation>
    <scope>NUCLEOTIDE SEQUENCE [LARGE SCALE GENOMIC DNA]</scope>
    <source>
        <strain>MoPn / Nigg</strain>
    </source>
</reference>
<proteinExistence type="inferred from homology"/>
<feature type="chain" id="PRO_0000176256" description="Elongation factor 4">
    <location>
        <begin position="1"/>
        <end position="602"/>
    </location>
</feature>
<feature type="domain" description="tr-type G">
    <location>
        <begin position="7"/>
        <end position="188"/>
    </location>
</feature>
<feature type="binding site" evidence="1">
    <location>
        <begin position="19"/>
        <end position="24"/>
    </location>
    <ligand>
        <name>GTP</name>
        <dbReference type="ChEBI" id="CHEBI:37565"/>
    </ligand>
</feature>
<feature type="binding site" evidence="1">
    <location>
        <begin position="135"/>
        <end position="138"/>
    </location>
    <ligand>
        <name>GTP</name>
        <dbReference type="ChEBI" id="CHEBI:37565"/>
    </ligand>
</feature>
<accession>Q9PKX6</accession>
<keyword id="KW-0997">Cell inner membrane</keyword>
<keyword id="KW-1003">Cell membrane</keyword>
<keyword id="KW-0342">GTP-binding</keyword>
<keyword id="KW-0378">Hydrolase</keyword>
<keyword id="KW-0472">Membrane</keyword>
<keyword id="KW-0547">Nucleotide-binding</keyword>
<keyword id="KW-0648">Protein biosynthesis</keyword>
<name>LEPA_CHLMU</name>
<dbReference type="EC" id="3.6.5.n1" evidence="1"/>
<dbReference type="EMBL" id="AE002160">
    <property type="protein sequence ID" value="AAF39197.1"/>
    <property type="molecule type" value="Genomic_DNA"/>
</dbReference>
<dbReference type="PIR" id="B81714">
    <property type="entry name" value="B81714"/>
</dbReference>
<dbReference type="RefSeq" id="WP_010230188.1">
    <property type="nucleotide sequence ID" value="NZ_CP063055.1"/>
</dbReference>
<dbReference type="SMR" id="Q9PKX6"/>
<dbReference type="GeneID" id="1246378"/>
<dbReference type="KEGG" id="cmu:TC_0334"/>
<dbReference type="eggNOG" id="COG0481">
    <property type="taxonomic scope" value="Bacteria"/>
</dbReference>
<dbReference type="HOGENOM" id="CLU_009995_3_3_0"/>
<dbReference type="OrthoDB" id="9804431at2"/>
<dbReference type="Proteomes" id="UP000000800">
    <property type="component" value="Chromosome"/>
</dbReference>
<dbReference type="GO" id="GO:0005886">
    <property type="term" value="C:plasma membrane"/>
    <property type="evidence" value="ECO:0007669"/>
    <property type="project" value="UniProtKB-SubCell"/>
</dbReference>
<dbReference type="GO" id="GO:0005525">
    <property type="term" value="F:GTP binding"/>
    <property type="evidence" value="ECO:0007669"/>
    <property type="project" value="UniProtKB-UniRule"/>
</dbReference>
<dbReference type="GO" id="GO:0003924">
    <property type="term" value="F:GTPase activity"/>
    <property type="evidence" value="ECO:0007669"/>
    <property type="project" value="UniProtKB-UniRule"/>
</dbReference>
<dbReference type="GO" id="GO:0043022">
    <property type="term" value="F:ribosome binding"/>
    <property type="evidence" value="ECO:0007669"/>
    <property type="project" value="UniProtKB-UniRule"/>
</dbReference>
<dbReference type="GO" id="GO:0003746">
    <property type="term" value="F:translation elongation factor activity"/>
    <property type="evidence" value="ECO:0007669"/>
    <property type="project" value="UniProtKB-UniRule"/>
</dbReference>
<dbReference type="GO" id="GO:0045727">
    <property type="term" value="P:positive regulation of translation"/>
    <property type="evidence" value="ECO:0007669"/>
    <property type="project" value="UniProtKB-UniRule"/>
</dbReference>
<dbReference type="CDD" id="cd03699">
    <property type="entry name" value="EF4_II"/>
    <property type="match status" value="1"/>
</dbReference>
<dbReference type="CDD" id="cd16260">
    <property type="entry name" value="EF4_III"/>
    <property type="match status" value="1"/>
</dbReference>
<dbReference type="CDD" id="cd01890">
    <property type="entry name" value="LepA"/>
    <property type="match status" value="1"/>
</dbReference>
<dbReference type="CDD" id="cd03709">
    <property type="entry name" value="lepA_C"/>
    <property type="match status" value="1"/>
</dbReference>
<dbReference type="FunFam" id="3.40.50.300:FF:000078">
    <property type="entry name" value="Elongation factor 4"/>
    <property type="match status" value="1"/>
</dbReference>
<dbReference type="FunFam" id="2.40.30.10:FF:000015">
    <property type="entry name" value="Translation factor GUF1, mitochondrial"/>
    <property type="match status" value="1"/>
</dbReference>
<dbReference type="FunFam" id="3.30.70.240:FF:000007">
    <property type="entry name" value="Translation factor GUF1, mitochondrial"/>
    <property type="match status" value="1"/>
</dbReference>
<dbReference type="FunFam" id="3.30.70.2570:FF:000001">
    <property type="entry name" value="Translation factor GUF1, mitochondrial"/>
    <property type="match status" value="1"/>
</dbReference>
<dbReference type="FunFam" id="3.30.70.870:FF:000004">
    <property type="entry name" value="Translation factor GUF1, mitochondrial"/>
    <property type="match status" value="1"/>
</dbReference>
<dbReference type="Gene3D" id="3.30.70.240">
    <property type="match status" value="1"/>
</dbReference>
<dbReference type="Gene3D" id="3.30.70.2570">
    <property type="entry name" value="Elongation factor 4, C-terminal domain"/>
    <property type="match status" value="1"/>
</dbReference>
<dbReference type="Gene3D" id="3.30.70.870">
    <property type="entry name" value="Elongation Factor G (Translational Gtpase), domain 3"/>
    <property type="match status" value="1"/>
</dbReference>
<dbReference type="Gene3D" id="3.40.50.300">
    <property type="entry name" value="P-loop containing nucleotide triphosphate hydrolases"/>
    <property type="match status" value="1"/>
</dbReference>
<dbReference type="Gene3D" id="2.40.30.10">
    <property type="entry name" value="Translation factors"/>
    <property type="match status" value="1"/>
</dbReference>
<dbReference type="HAMAP" id="MF_00071">
    <property type="entry name" value="LepA"/>
    <property type="match status" value="1"/>
</dbReference>
<dbReference type="InterPro" id="IPR006297">
    <property type="entry name" value="EF-4"/>
</dbReference>
<dbReference type="InterPro" id="IPR035647">
    <property type="entry name" value="EFG_III/V"/>
</dbReference>
<dbReference type="InterPro" id="IPR000640">
    <property type="entry name" value="EFG_V-like"/>
</dbReference>
<dbReference type="InterPro" id="IPR004161">
    <property type="entry name" value="EFTu-like_2"/>
</dbReference>
<dbReference type="InterPro" id="IPR038363">
    <property type="entry name" value="LepA_C_sf"/>
</dbReference>
<dbReference type="InterPro" id="IPR013842">
    <property type="entry name" value="LepA_CTD"/>
</dbReference>
<dbReference type="InterPro" id="IPR035654">
    <property type="entry name" value="LepA_IV"/>
</dbReference>
<dbReference type="InterPro" id="IPR027417">
    <property type="entry name" value="P-loop_NTPase"/>
</dbReference>
<dbReference type="InterPro" id="IPR005225">
    <property type="entry name" value="Small_GTP-bd"/>
</dbReference>
<dbReference type="InterPro" id="IPR000795">
    <property type="entry name" value="T_Tr_GTP-bd_dom"/>
</dbReference>
<dbReference type="InterPro" id="IPR009000">
    <property type="entry name" value="Transl_B-barrel_sf"/>
</dbReference>
<dbReference type="NCBIfam" id="TIGR01393">
    <property type="entry name" value="lepA"/>
    <property type="match status" value="1"/>
</dbReference>
<dbReference type="NCBIfam" id="TIGR00231">
    <property type="entry name" value="small_GTP"/>
    <property type="match status" value="1"/>
</dbReference>
<dbReference type="PANTHER" id="PTHR43512:SF4">
    <property type="entry name" value="TRANSLATION FACTOR GUF1 HOMOLOG, CHLOROPLASTIC"/>
    <property type="match status" value="1"/>
</dbReference>
<dbReference type="PANTHER" id="PTHR43512">
    <property type="entry name" value="TRANSLATION FACTOR GUF1-RELATED"/>
    <property type="match status" value="1"/>
</dbReference>
<dbReference type="Pfam" id="PF00679">
    <property type="entry name" value="EFG_C"/>
    <property type="match status" value="1"/>
</dbReference>
<dbReference type="Pfam" id="PF00009">
    <property type="entry name" value="GTP_EFTU"/>
    <property type="match status" value="1"/>
</dbReference>
<dbReference type="Pfam" id="PF03144">
    <property type="entry name" value="GTP_EFTU_D2"/>
    <property type="match status" value="1"/>
</dbReference>
<dbReference type="Pfam" id="PF06421">
    <property type="entry name" value="LepA_C"/>
    <property type="match status" value="1"/>
</dbReference>
<dbReference type="PRINTS" id="PR00315">
    <property type="entry name" value="ELONGATNFCT"/>
</dbReference>
<dbReference type="SUPFAM" id="SSF54980">
    <property type="entry name" value="EF-G C-terminal domain-like"/>
    <property type="match status" value="2"/>
</dbReference>
<dbReference type="SUPFAM" id="SSF52540">
    <property type="entry name" value="P-loop containing nucleoside triphosphate hydrolases"/>
    <property type="match status" value="1"/>
</dbReference>
<dbReference type="SUPFAM" id="SSF50447">
    <property type="entry name" value="Translation proteins"/>
    <property type="match status" value="1"/>
</dbReference>
<dbReference type="PROSITE" id="PS51722">
    <property type="entry name" value="G_TR_2"/>
    <property type="match status" value="1"/>
</dbReference>
<gene>
    <name evidence="1" type="primary">lepA</name>
    <name type="ordered locus">TC_0334</name>
</gene>
<organism>
    <name type="scientific">Chlamydia muridarum (strain MoPn / Nigg)</name>
    <dbReference type="NCBI Taxonomy" id="243161"/>
    <lineage>
        <taxon>Bacteria</taxon>
        <taxon>Pseudomonadati</taxon>
        <taxon>Chlamydiota</taxon>
        <taxon>Chlamydiia</taxon>
        <taxon>Chlamydiales</taxon>
        <taxon>Chlamydiaceae</taxon>
        <taxon>Chlamydia/Chlamydophila group</taxon>
        <taxon>Chlamydia</taxon>
    </lineage>
</organism>